<gene>
    <name evidence="1" type="primary">rpl3</name>
    <name type="ordered locus">Tneu_0813</name>
</gene>
<proteinExistence type="inferred from homology"/>
<reference key="1">
    <citation type="submission" date="2008-03" db="EMBL/GenBank/DDBJ databases">
        <title>Complete sequence of Thermoproteus neutrophilus V24Sta.</title>
        <authorList>
            <consortium name="US DOE Joint Genome Institute"/>
            <person name="Copeland A."/>
            <person name="Lucas S."/>
            <person name="Lapidus A."/>
            <person name="Glavina del Rio T."/>
            <person name="Dalin E."/>
            <person name="Tice H."/>
            <person name="Bruce D."/>
            <person name="Goodwin L."/>
            <person name="Pitluck S."/>
            <person name="Sims D."/>
            <person name="Brettin T."/>
            <person name="Detter J.C."/>
            <person name="Han C."/>
            <person name="Kuske C.R."/>
            <person name="Schmutz J."/>
            <person name="Larimer F."/>
            <person name="Land M."/>
            <person name="Hauser L."/>
            <person name="Kyrpides N."/>
            <person name="Mikhailova N."/>
            <person name="Biddle J.F."/>
            <person name="Zhang Z."/>
            <person name="Fitz-Gibbon S.T."/>
            <person name="Lowe T.M."/>
            <person name="Saltikov C."/>
            <person name="House C.H."/>
            <person name="Richardson P."/>
        </authorList>
    </citation>
    <scope>NUCLEOTIDE SEQUENCE [LARGE SCALE GENOMIC DNA]</scope>
    <source>
        <strain>DSM 2338 / JCM 9278 / NBRC 100436 / V24Sta</strain>
    </source>
</reference>
<feature type="chain" id="PRO_0000353628" description="Large ribosomal subunit protein uL3">
    <location>
        <begin position="1"/>
        <end position="338"/>
    </location>
</feature>
<feature type="region of interest" description="Disordered" evidence="2">
    <location>
        <begin position="230"/>
        <end position="253"/>
    </location>
</feature>
<accession>B1YD88</accession>
<protein>
    <recommendedName>
        <fullName evidence="1">Large ribosomal subunit protein uL3</fullName>
    </recommendedName>
    <alternativeName>
        <fullName evidence="3">50S ribosomal protein L3</fullName>
    </alternativeName>
</protein>
<dbReference type="EMBL" id="CP001014">
    <property type="protein sequence ID" value="ACB39751.1"/>
    <property type="molecule type" value="Genomic_DNA"/>
</dbReference>
<dbReference type="RefSeq" id="WP_012350171.1">
    <property type="nucleotide sequence ID" value="NC_010525.1"/>
</dbReference>
<dbReference type="SMR" id="B1YD88"/>
<dbReference type="STRING" id="444157.Tneu_0813"/>
<dbReference type="GeneID" id="6164539"/>
<dbReference type="KEGG" id="tne:Tneu_0813"/>
<dbReference type="eggNOG" id="arCOG04070">
    <property type="taxonomic scope" value="Archaea"/>
</dbReference>
<dbReference type="HOGENOM" id="CLU_033361_2_0_2"/>
<dbReference type="OrthoDB" id="6121at2157"/>
<dbReference type="Proteomes" id="UP000001694">
    <property type="component" value="Chromosome"/>
</dbReference>
<dbReference type="GO" id="GO:0022625">
    <property type="term" value="C:cytosolic large ribosomal subunit"/>
    <property type="evidence" value="ECO:0007669"/>
    <property type="project" value="TreeGrafter"/>
</dbReference>
<dbReference type="GO" id="GO:0019843">
    <property type="term" value="F:rRNA binding"/>
    <property type="evidence" value="ECO:0007669"/>
    <property type="project" value="UniProtKB-UniRule"/>
</dbReference>
<dbReference type="GO" id="GO:0003735">
    <property type="term" value="F:structural constituent of ribosome"/>
    <property type="evidence" value="ECO:0007669"/>
    <property type="project" value="InterPro"/>
</dbReference>
<dbReference type="GO" id="GO:0006412">
    <property type="term" value="P:translation"/>
    <property type="evidence" value="ECO:0007669"/>
    <property type="project" value="UniProtKB-UniRule"/>
</dbReference>
<dbReference type="Gene3D" id="3.30.1430.10">
    <property type="match status" value="1"/>
</dbReference>
<dbReference type="Gene3D" id="4.10.960.10">
    <property type="entry name" value="Ribosomal protein L3, domain 3"/>
    <property type="match status" value="1"/>
</dbReference>
<dbReference type="Gene3D" id="2.40.30.10">
    <property type="entry name" value="Translation factors"/>
    <property type="match status" value="1"/>
</dbReference>
<dbReference type="HAMAP" id="MF_01325_A">
    <property type="entry name" value="Ribosomal_uL3_A"/>
    <property type="match status" value="1"/>
</dbReference>
<dbReference type="InterPro" id="IPR045077">
    <property type="entry name" value="L3_arc_euk"/>
</dbReference>
<dbReference type="InterPro" id="IPR044892">
    <property type="entry name" value="Ribosomal_L3_dom_3_arc_sf"/>
</dbReference>
<dbReference type="InterPro" id="IPR000597">
    <property type="entry name" value="Ribosomal_uL3"/>
</dbReference>
<dbReference type="InterPro" id="IPR019928">
    <property type="entry name" value="Ribosomal_uL3_arc"/>
</dbReference>
<dbReference type="InterPro" id="IPR019926">
    <property type="entry name" value="Ribosomal_uL3_CS"/>
</dbReference>
<dbReference type="InterPro" id="IPR009000">
    <property type="entry name" value="Transl_B-barrel_sf"/>
</dbReference>
<dbReference type="NCBIfam" id="TIGR03626">
    <property type="entry name" value="L3_arch"/>
    <property type="match status" value="1"/>
</dbReference>
<dbReference type="NCBIfam" id="NF003261">
    <property type="entry name" value="PRK04231.1"/>
    <property type="match status" value="1"/>
</dbReference>
<dbReference type="PANTHER" id="PTHR11363">
    <property type="entry name" value="60S RIBOSOMAL PROTEIN L3-RELATED"/>
    <property type="match status" value="1"/>
</dbReference>
<dbReference type="PANTHER" id="PTHR11363:SF5">
    <property type="entry name" value="LARGE RIBOSOMAL SUBUNIT PROTEIN UL3"/>
    <property type="match status" value="1"/>
</dbReference>
<dbReference type="Pfam" id="PF00297">
    <property type="entry name" value="Ribosomal_L3"/>
    <property type="match status" value="1"/>
</dbReference>
<dbReference type="SUPFAM" id="SSF50447">
    <property type="entry name" value="Translation proteins"/>
    <property type="match status" value="1"/>
</dbReference>
<dbReference type="PROSITE" id="PS00474">
    <property type="entry name" value="RIBOSOMAL_L3"/>
    <property type="match status" value="1"/>
</dbReference>
<name>RL3_PYRNV</name>
<comment type="function">
    <text evidence="1">One of the primary rRNA binding proteins, it binds directly near the 3'-end of the 23S rRNA, where it nucleates assembly of the 50S subunit.</text>
</comment>
<comment type="subunit">
    <text evidence="1">Part of the 50S ribosomal subunit. Forms a cluster with proteins L14 and L24e.</text>
</comment>
<comment type="similarity">
    <text evidence="1">Belongs to the universal ribosomal protein uL3 family.</text>
</comment>
<keyword id="KW-0687">Ribonucleoprotein</keyword>
<keyword id="KW-0689">Ribosomal protein</keyword>
<keyword id="KW-0694">RNA-binding</keyword>
<keyword id="KW-0699">rRNA-binding</keyword>
<evidence type="ECO:0000255" key="1">
    <source>
        <dbReference type="HAMAP-Rule" id="MF_01325"/>
    </source>
</evidence>
<evidence type="ECO:0000256" key="2">
    <source>
        <dbReference type="SAM" id="MobiDB-lite"/>
    </source>
</evidence>
<evidence type="ECO:0000305" key="3"/>
<sequence length="338" mass="37426">MGLKINRPRRGSMGVYPRKRAADIVPRVRTWPEVNLGKPALLGFAAYKAGMLHAVVVEDRPTSPLYGKEVVRPVTVLDAPPLFIWGFRLYTLDPTNGYRRSIAEVWAPELPAYIRRVLTLPEKADVDKQMKKVEEFKDVAVDVRALVATQPHLSGIGKKTPELLEIPIGGVPSVDERIKFAVSLLGKTVSPKEVFTAGQLVDVIAVTKGKGYQGVIKRFGVTILPRWHKHRKGHRRTGTIGPQAPALMFTQPRPGQMGFHQRTEYNKRVVKIGDNGAEITPKSGFLHYGVIRGPYILIQGTVPGAKKRLVVLRHPARPPKKAPPAAEPQVVWLSSQSI</sequence>
<organism>
    <name type="scientific">Pyrobaculum neutrophilum (strain DSM 2338 / JCM 9278 / NBRC 100436 / V24Sta)</name>
    <name type="common">Thermoproteus neutrophilus</name>
    <dbReference type="NCBI Taxonomy" id="444157"/>
    <lineage>
        <taxon>Archaea</taxon>
        <taxon>Thermoproteota</taxon>
        <taxon>Thermoprotei</taxon>
        <taxon>Thermoproteales</taxon>
        <taxon>Thermoproteaceae</taxon>
        <taxon>Pyrobaculum</taxon>
    </lineage>
</organism>